<protein>
    <recommendedName>
        <fullName evidence="1">Deoxyribose-phosphate aldolase</fullName>
        <shortName evidence="1">DERA</shortName>
        <ecNumber evidence="1">4.1.2.4</ecNumber>
    </recommendedName>
    <alternativeName>
        <fullName evidence="1">2-deoxy-D-ribose 5-phosphate aldolase</fullName>
    </alternativeName>
    <alternativeName>
        <fullName evidence="1">Phosphodeoxyriboaldolase</fullName>
        <shortName evidence="1">Deoxyriboaldolase</shortName>
    </alternativeName>
</protein>
<evidence type="ECO:0000255" key="1">
    <source>
        <dbReference type="HAMAP-Rule" id="MF_00592"/>
    </source>
</evidence>
<organism>
    <name type="scientific">Shewanella baltica (strain OS195)</name>
    <dbReference type="NCBI Taxonomy" id="399599"/>
    <lineage>
        <taxon>Bacteria</taxon>
        <taxon>Pseudomonadati</taxon>
        <taxon>Pseudomonadota</taxon>
        <taxon>Gammaproteobacteria</taxon>
        <taxon>Alteromonadales</taxon>
        <taxon>Shewanellaceae</taxon>
        <taxon>Shewanella</taxon>
    </lineage>
</organism>
<dbReference type="EC" id="4.1.2.4" evidence="1"/>
<dbReference type="EMBL" id="CP000891">
    <property type="protein sequence ID" value="ABX50528.1"/>
    <property type="molecule type" value="Genomic_DNA"/>
</dbReference>
<dbReference type="RefSeq" id="WP_006086931.1">
    <property type="nucleotide sequence ID" value="NC_009997.1"/>
</dbReference>
<dbReference type="SMR" id="A9KZ80"/>
<dbReference type="GeneID" id="11774917"/>
<dbReference type="KEGG" id="sbn:Sbal195_3366"/>
<dbReference type="HOGENOM" id="CLU_053595_3_1_6"/>
<dbReference type="UniPathway" id="UPA00002">
    <property type="reaction ID" value="UER00468"/>
</dbReference>
<dbReference type="Proteomes" id="UP000000770">
    <property type="component" value="Chromosome"/>
</dbReference>
<dbReference type="GO" id="GO:0005737">
    <property type="term" value="C:cytoplasm"/>
    <property type="evidence" value="ECO:0007669"/>
    <property type="project" value="UniProtKB-SubCell"/>
</dbReference>
<dbReference type="GO" id="GO:0004139">
    <property type="term" value="F:deoxyribose-phosphate aldolase activity"/>
    <property type="evidence" value="ECO:0007669"/>
    <property type="project" value="UniProtKB-UniRule"/>
</dbReference>
<dbReference type="GO" id="GO:0006018">
    <property type="term" value="P:2-deoxyribose 1-phosphate catabolic process"/>
    <property type="evidence" value="ECO:0007669"/>
    <property type="project" value="UniProtKB-UniRule"/>
</dbReference>
<dbReference type="GO" id="GO:0016052">
    <property type="term" value="P:carbohydrate catabolic process"/>
    <property type="evidence" value="ECO:0007669"/>
    <property type="project" value="TreeGrafter"/>
</dbReference>
<dbReference type="GO" id="GO:0009264">
    <property type="term" value="P:deoxyribonucleotide catabolic process"/>
    <property type="evidence" value="ECO:0007669"/>
    <property type="project" value="InterPro"/>
</dbReference>
<dbReference type="CDD" id="cd00959">
    <property type="entry name" value="DeoC"/>
    <property type="match status" value="1"/>
</dbReference>
<dbReference type="Gene3D" id="3.20.20.70">
    <property type="entry name" value="Aldolase class I"/>
    <property type="match status" value="1"/>
</dbReference>
<dbReference type="HAMAP" id="MF_00592">
    <property type="entry name" value="DeoC_type2"/>
    <property type="match status" value="1"/>
</dbReference>
<dbReference type="InterPro" id="IPR013785">
    <property type="entry name" value="Aldolase_TIM"/>
</dbReference>
<dbReference type="InterPro" id="IPR011343">
    <property type="entry name" value="DeoC"/>
</dbReference>
<dbReference type="InterPro" id="IPR002915">
    <property type="entry name" value="DeoC/FbaB/LacD_aldolase"/>
</dbReference>
<dbReference type="InterPro" id="IPR023649">
    <property type="entry name" value="DeoC_typeII"/>
</dbReference>
<dbReference type="NCBIfam" id="TIGR00126">
    <property type="entry name" value="deoC"/>
    <property type="match status" value="1"/>
</dbReference>
<dbReference type="PANTHER" id="PTHR10889">
    <property type="entry name" value="DEOXYRIBOSE-PHOSPHATE ALDOLASE"/>
    <property type="match status" value="1"/>
</dbReference>
<dbReference type="PANTHER" id="PTHR10889:SF3">
    <property type="entry name" value="DEOXYRIBOSE-PHOSPHATE ALDOLASE"/>
    <property type="match status" value="1"/>
</dbReference>
<dbReference type="Pfam" id="PF01791">
    <property type="entry name" value="DeoC"/>
    <property type="match status" value="1"/>
</dbReference>
<dbReference type="PIRSF" id="PIRSF001357">
    <property type="entry name" value="DeoC"/>
    <property type="match status" value="1"/>
</dbReference>
<dbReference type="SMART" id="SM01133">
    <property type="entry name" value="DeoC"/>
    <property type="match status" value="1"/>
</dbReference>
<dbReference type="SUPFAM" id="SSF51569">
    <property type="entry name" value="Aldolase"/>
    <property type="match status" value="1"/>
</dbReference>
<feature type="chain" id="PRO_1000082418" description="Deoxyribose-phosphate aldolase">
    <location>
        <begin position="1"/>
        <end position="256"/>
    </location>
</feature>
<feature type="active site" description="Proton donor/acceptor" evidence="1">
    <location>
        <position position="102"/>
    </location>
</feature>
<feature type="active site" description="Schiff-base intermediate with acetaldehyde" evidence="1">
    <location>
        <position position="165"/>
    </location>
</feature>
<feature type="active site" description="Proton donor/acceptor" evidence="1">
    <location>
        <position position="197"/>
    </location>
</feature>
<sequence>MTDLKKAAQRAIELMDLTTLNDDDTDQKVIDLCHKAKTAAGNTAAICIYPRFIPIARKTLDEIGAEDIQIATVTNFPHGNDDIAIAVLETRAAVAYGADEVDVVFPYRALMEGNETIGFELVKACKEACGEVLLKVIIESGVLADPALIRRASELSIDAGADFIKTSTGKVPVNATLEAAEIMLTVISEKNTQVGFKPAGGVRDAAQAAEFLGVAERILGADWVSPRTFRFGASSLLNSLLHTLELADAPKPTQGY</sequence>
<reference key="1">
    <citation type="submission" date="2007-11" db="EMBL/GenBank/DDBJ databases">
        <title>Complete sequence of chromosome of Shewanella baltica OS195.</title>
        <authorList>
            <consortium name="US DOE Joint Genome Institute"/>
            <person name="Copeland A."/>
            <person name="Lucas S."/>
            <person name="Lapidus A."/>
            <person name="Barry K."/>
            <person name="Glavina del Rio T."/>
            <person name="Dalin E."/>
            <person name="Tice H."/>
            <person name="Pitluck S."/>
            <person name="Chain P."/>
            <person name="Malfatti S."/>
            <person name="Shin M."/>
            <person name="Vergez L."/>
            <person name="Schmutz J."/>
            <person name="Larimer F."/>
            <person name="Land M."/>
            <person name="Hauser L."/>
            <person name="Kyrpides N."/>
            <person name="Kim E."/>
            <person name="Brettar I."/>
            <person name="Rodrigues J."/>
            <person name="Konstantinidis K."/>
            <person name="Klappenbach J."/>
            <person name="Hofle M."/>
            <person name="Tiedje J."/>
            <person name="Richardson P."/>
        </authorList>
    </citation>
    <scope>NUCLEOTIDE SEQUENCE [LARGE SCALE GENOMIC DNA]</scope>
    <source>
        <strain>OS195</strain>
    </source>
</reference>
<gene>
    <name evidence="1" type="primary">deoC</name>
    <name type="ordered locus">Sbal195_3366</name>
</gene>
<proteinExistence type="inferred from homology"/>
<name>DEOC_SHEB9</name>
<comment type="function">
    <text evidence="1">Catalyzes a reversible aldol reaction between acetaldehyde and D-glyceraldehyde 3-phosphate to generate 2-deoxy-D-ribose 5-phosphate.</text>
</comment>
<comment type="catalytic activity">
    <reaction evidence="1">
        <text>2-deoxy-D-ribose 5-phosphate = D-glyceraldehyde 3-phosphate + acetaldehyde</text>
        <dbReference type="Rhea" id="RHEA:12821"/>
        <dbReference type="ChEBI" id="CHEBI:15343"/>
        <dbReference type="ChEBI" id="CHEBI:59776"/>
        <dbReference type="ChEBI" id="CHEBI:62877"/>
        <dbReference type="EC" id="4.1.2.4"/>
    </reaction>
</comment>
<comment type="pathway">
    <text evidence="1">Carbohydrate degradation; 2-deoxy-D-ribose 1-phosphate degradation; D-glyceraldehyde 3-phosphate and acetaldehyde from 2-deoxy-alpha-D-ribose 1-phosphate: step 2/2.</text>
</comment>
<comment type="subcellular location">
    <subcellularLocation>
        <location evidence="1">Cytoplasm</location>
    </subcellularLocation>
</comment>
<comment type="similarity">
    <text evidence="1">Belongs to the DeoC/FbaB aldolase family. DeoC type 2 subfamily.</text>
</comment>
<keyword id="KW-0963">Cytoplasm</keyword>
<keyword id="KW-0456">Lyase</keyword>
<keyword id="KW-0704">Schiff base</keyword>
<accession>A9KZ80</accession>